<feature type="chain" id="PRO_0000065302" description="Uncharacterized protein F19C6.5">
    <location>
        <begin position="1"/>
        <end position="251"/>
    </location>
</feature>
<feature type="transmembrane region" description="Helical" evidence="1">
    <location>
        <begin position="56"/>
        <end position="76"/>
    </location>
</feature>
<feature type="transmembrane region" description="Helical" evidence="1">
    <location>
        <begin position="104"/>
        <end position="124"/>
    </location>
</feature>
<feature type="transmembrane region" description="Helical" evidence="1">
    <location>
        <begin position="184"/>
        <end position="204"/>
    </location>
</feature>
<feature type="transmembrane region" description="Helical" evidence="1">
    <location>
        <begin position="208"/>
        <end position="228"/>
    </location>
</feature>
<keyword id="KW-0472">Membrane</keyword>
<keyword id="KW-1185">Reference proteome</keyword>
<keyword id="KW-0812">Transmembrane</keyword>
<keyword id="KW-1133">Transmembrane helix</keyword>
<organism>
    <name type="scientific">Caenorhabditis elegans</name>
    <dbReference type="NCBI Taxonomy" id="6239"/>
    <lineage>
        <taxon>Eukaryota</taxon>
        <taxon>Metazoa</taxon>
        <taxon>Ecdysozoa</taxon>
        <taxon>Nematoda</taxon>
        <taxon>Chromadorea</taxon>
        <taxon>Rhabditida</taxon>
        <taxon>Rhabditina</taxon>
        <taxon>Rhabditomorpha</taxon>
        <taxon>Rhabditoidea</taxon>
        <taxon>Rhabditidae</taxon>
        <taxon>Peloderinae</taxon>
        <taxon>Caenorhabditis</taxon>
    </lineage>
</organism>
<reference key="1">
    <citation type="journal article" date="1998" name="Science">
        <title>Genome sequence of the nematode C. elegans: a platform for investigating biology.</title>
        <authorList>
            <consortium name="The C. elegans sequencing consortium"/>
        </authorList>
    </citation>
    <scope>NUCLEOTIDE SEQUENCE [LARGE SCALE GENOMIC DNA]</scope>
    <source>
        <strain>Bristol N2</strain>
    </source>
</reference>
<name>YQR5_CAEEL</name>
<protein>
    <recommendedName>
        <fullName>Uncharacterized protein F19C6.5</fullName>
    </recommendedName>
</protein>
<accession>Q09308</accession>
<sequence>MTEEKDEYGTIVVARVAMEENMFNPQPDIPRIRNDSTHSYQQPESMLEKLNTYYTLAVVIAQLTIGVLGNSLTLVADATRIFADHLELFQYDRAATPGKRLTEIITVGITNVILFLLFVAFLLTASGRAATMEFDINRLYLSIGTAMAMTANTLQTLCHFRTWQRERSYHSSLYTGSKRNQLMHGFVYHFIAYFVLVSSLLIIVNKDYLIADVITTYATSLLILANISSIGYQLYHEYFSLEHPQDEYEPI</sequence>
<gene>
    <name type="ORF">F19C6.5</name>
</gene>
<proteinExistence type="predicted"/>
<evidence type="ECO:0000255" key="1"/>
<evidence type="ECO:0000305" key="2"/>
<comment type="subcellular location">
    <subcellularLocation>
        <location evidence="2">Membrane</location>
        <topology evidence="2">Multi-pass membrane protein</topology>
    </subcellularLocation>
</comment>
<dbReference type="EMBL" id="Z48006">
    <property type="protein sequence ID" value="CAA88049.1"/>
    <property type="molecule type" value="Genomic_DNA"/>
</dbReference>
<dbReference type="PIR" id="T21114">
    <property type="entry name" value="T21114"/>
</dbReference>
<dbReference type="RefSeq" id="NP_509675.1">
    <property type="nucleotide sequence ID" value="NM_077274.5"/>
</dbReference>
<dbReference type="SMR" id="Q09308"/>
<dbReference type="FunCoup" id="Q09308">
    <property type="interactions" value="1264"/>
</dbReference>
<dbReference type="STRING" id="6239.F19C6.5.1"/>
<dbReference type="PaxDb" id="6239-F19C6.5"/>
<dbReference type="PeptideAtlas" id="Q09308"/>
<dbReference type="EnsemblMetazoa" id="F19C6.5.1">
    <property type="protein sequence ID" value="F19C6.5.1"/>
    <property type="gene ID" value="WBGene00008954"/>
</dbReference>
<dbReference type="GeneID" id="184677"/>
<dbReference type="KEGG" id="cel:CELE_F19C6.5"/>
<dbReference type="UCSC" id="F19C6.5">
    <property type="organism name" value="c. elegans"/>
</dbReference>
<dbReference type="AGR" id="WB:WBGene00008954"/>
<dbReference type="CTD" id="184677"/>
<dbReference type="WormBase" id="F19C6.5">
    <property type="protein sequence ID" value="CE01558"/>
    <property type="gene ID" value="WBGene00008954"/>
</dbReference>
<dbReference type="eggNOG" id="ENOG502TFII">
    <property type="taxonomic scope" value="Eukaryota"/>
</dbReference>
<dbReference type="HOGENOM" id="CLU_1107966_0_0_1"/>
<dbReference type="InParanoid" id="Q09308"/>
<dbReference type="OMA" id="TRIFADH"/>
<dbReference type="OrthoDB" id="5801201at2759"/>
<dbReference type="PhylomeDB" id="Q09308"/>
<dbReference type="PRO" id="PR:Q09308"/>
<dbReference type="Proteomes" id="UP000001940">
    <property type="component" value="Chromosome X"/>
</dbReference>
<dbReference type="Bgee" id="WBGene00008954">
    <property type="expression patterns" value="Expressed in embryo and 4 other cell types or tissues"/>
</dbReference>
<dbReference type="GO" id="GO:0016020">
    <property type="term" value="C:membrane"/>
    <property type="evidence" value="ECO:0007669"/>
    <property type="project" value="UniProtKB-SubCell"/>
</dbReference>
<dbReference type="Gene3D" id="1.20.1510.10">
    <property type="entry name" value="Cation efflux protein transmembrane domain"/>
    <property type="match status" value="1"/>
</dbReference>
<dbReference type="InterPro" id="IPR027469">
    <property type="entry name" value="Cation_efflux_TMD_sf"/>
</dbReference>
<dbReference type="SUPFAM" id="SSF161111">
    <property type="entry name" value="Cation efflux protein transmembrane domain-like"/>
    <property type="match status" value="1"/>
</dbReference>